<feature type="chain" id="PRO_0000399229" description="Increased recombination centers protein 6">
    <location>
        <begin position="1"/>
        <end position="237"/>
    </location>
</feature>
<dbReference type="EMBL" id="AAFW02000176">
    <property type="protein sequence ID" value="EDN59194.1"/>
    <property type="molecule type" value="Genomic_DNA"/>
</dbReference>
<dbReference type="SMR" id="A7A283"/>
<dbReference type="HOGENOM" id="CLU_079666_0_0_1"/>
<dbReference type="OrthoDB" id="39866at4893"/>
<dbReference type="Proteomes" id="UP000007060">
    <property type="component" value="Unassembled WGS sequence"/>
</dbReference>
<dbReference type="GO" id="GO:0030674">
    <property type="term" value="F:protein-macromolecule adaptor activity"/>
    <property type="evidence" value="ECO:0007669"/>
    <property type="project" value="TreeGrafter"/>
</dbReference>
<dbReference type="GO" id="GO:0016192">
    <property type="term" value="P:vesicle-mediated transport"/>
    <property type="evidence" value="ECO:0007669"/>
    <property type="project" value="InterPro"/>
</dbReference>
<dbReference type="FunFam" id="3.40.50.11960:FF:000002">
    <property type="entry name" value="Increased recombination centers protein 6"/>
    <property type="match status" value="1"/>
</dbReference>
<dbReference type="Gene3D" id="3.40.50.11960">
    <property type="match status" value="1"/>
</dbReference>
<dbReference type="InterPro" id="IPR034627">
    <property type="entry name" value="Irc6"/>
</dbReference>
<dbReference type="PANTHER" id="PTHR28043">
    <property type="entry name" value="INCREASED RECOMBINATION CENTERS PROTEIN 6"/>
    <property type="match status" value="1"/>
</dbReference>
<dbReference type="PANTHER" id="PTHR28043:SF1">
    <property type="entry name" value="INCREASED RECOMBINATION CENTERS PROTEIN 6"/>
    <property type="match status" value="1"/>
</dbReference>
<keyword id="KW-0160">Chromosomal rearrangement</keyword>
<protein>
    <recommendedName>
        <fullName>Increased recombination centers protein 6</fullName>
    </recommendedName>
</protein>
<evidence type="ECO:0000250" key="1"/>
<evidence type="ECO:0000305" key="2"/>
<sequence>MVLQYPQNKILVLSDHPHNFSKTQFLQDLFHCSSTGISIVKDQTWENRYYKVHFDLYIDSCKDIPVWVEEFITPECEPLRNVMAGIILITDIRQTKPQELLHQFMIAAHRNTFVVLVNVNEEVEQDEIDELNEIWSNAFTNVIEFVNWKRSKPTVNHNDYGEKLGLDRIQEIIDTHDWLKCEVLPATKIREEIPNEMPLEQIIRNLQSARLKYKSIENSSEADAFANEMADELSRYL</sequence>
<name>IRC6_YEAS7</name>
<gene>
    <name type="primary">IRC6</name>
    <name type="ORF">SCY_1793</name>
</gene>
<accession>A7A283</accession>
<organism>
    <name type="scientific">Saccharomyces cerevisiae (strain YJM789)</name>
    <name type="common">Baker's yeast</name>
    <dbReference type="NCBI Taxonomy" id="307796"/>
    <lineage>
        <taxon>Eukaryota</taxon>
        <taxon>Fungi</taxon>
        <taxon>Dikarya</taxon>
        <taxon>Ascomycota</taxon>
        <taxon>Saccharomycotina</taxon>
        <taxon>Saccharomycetes</taxon>
        <taxon>Saccharomycetales</taxon>
        <taxon>Saccharomycetaceae</taxon>
        <taxon>Saccharomyces</taxon>
    </lineage>
</organism>
<reference key="1">
    <citation type="journal article" date="2007" name="Proc. Natl. Acad. Sci. U.S.A.">
        <title>Genome sequencing and comparative analysis of Saccharomyces cerevisiae strain YJM789.</title>
        <authorList>
            <person name="Wei W."/>
            <person name="McCusker J.H."/>
            <person name="Hyman R.W."/>
            <person name="Jones T."/>
            <person name="Ning Y."/>
            <person name="Cao Z."/>
            <person name="Gu Z."/>
            <person name="Bruno D."/>
            <person name="Miranda M."/>
            <person name="Nguyen M."/>
            <person name="Wilhelmy J."/>
            <person name="Komp C."/>
            <person name="Tamse R."/>
            <person name="Wang X."/>
            <person name="Jia P."/>
            <person name="Luedi P."/>
            <person name="Oefner P.J."/>
            <person name="David L."/>
            <person name="Dietrich F.S."/>
            <person name="Li Y."/>
            <person name="Davis R.W."/>
            <person name="Steinmetz L.M."/>
        </authorList>
    </citation>
    <scope>NUCLEOTIDE SEQUENCE [LARGE SCALE GENOMIC DNA]</scope>
    <source>
        <strain>YJM789</strain>
    </source>
</reference>
<comment type="function">
    <text evidence="1">Involved in gross chromosomal rearrangements (GCRs) and telomere healing.</text>
</comment>
<comment type="similarity">
    <text evidence="2">Belongs to the IRC6 family.</text>
</comment>
<proteinExistence type="inferred from homology"/>